<organism>
    <name type="scientific">Psychromonas ingrahamii (strain DSM 17664 / CCUG 51855 / 37)</name>
    <dbReference type="NCBI Taxonomy" id="357804"/>
    <lineage>
        <taxon>Bacteria</taxon>
        <taxon>Pseudomonadati</taxon>
        <taxon>Pseudomonadota</taxon>
        <taxon>Gammaproteobacteria</taxon>
        <taxon>Alteromonadales</taxon>
        <taxon>Psychromonadaceae</taxon>
        <taxon>Psychromonas</taxon>
    </lineage>
</organism>
<name>PYRF_PSYIN</name>
<reference key="1">
    <citation type="journal article" date="2008" name="BMC Genomics">
        <title>Genomics of an extreme psychrophile, Psychromonas ingrahamii.</title>
        <authorList>
            <person name="Riley M."/>
            <person name="Staley J.T."/>
            <person name="Danchin A."/>
            <person name="Wang T.Z."/>
            <person name="Brettin T.S."/>
            <person name="Hauser L.J."/>
            <person name="Land M.L."/>
            <person name="Thompson L.S."/>
        </authorList>
    </citation>
    <scope>NUCLEOTIDE SEQUENCE [LARGE SCALE GENOMIC DNA]</scope>
    <source>
        <strain>DSM 17664 / CCUG 51855 / 37</strain>
    </source>
</reference>
<proteinExistence type="inferred from homology"/>
<keyword id="KW-0210">Decarboxylase</keyword>
<keyword id="KW-0456">Lyase</keyword>
<keyword id="KW-0665">Pyrimidine biosynthesis</keyword>
<keyword id="KW-1185">Reference proteome</keyword>
<comment type="function">
    <text evidence="1">Catalyzes the decarboxylation of orotidine 5'-monophosphate (OMP) to uridine 5'-monophosphate (UMP).</text>
</comment>
<comment type="catalytic activity">
    <reaction evidence="1">
        <text>orotidine 5'-phosphate + H(+) = UMP + CO2</text>
        <dbReference type="Rhea" id="RHEA:11596"/>
        <dbReference type="ChEBI" id="CHEBI:15378"/>
        <dbReference type="ChEBI" id="CHEBI:16526"/>
        <dbReference type="ChEBI" id="CHEBI:57538"/>
        <dbReference type="ChEBI" id="CHEBI:57865"/>
        <dbReference type="EC" id="4.1.1.23"/>
    </reaction>
</comment>
<comment type="pathway">
    <text evidence="1">Pyrimidine metabolism; UMP biosynthesis via de novo pathway; UMP from orotate: step 2/2.</text>
</comment>
<comment type="subunit">
    <text evidence="1">Homodimer.</text>
</comment>
<comment type="similarity">
    <text evidence="1">Belongs to the OMP decarboxylase family. Type 1 subfamily.</text>
</comment>
<dbReference type="EC" id="4.1.1.23" evidence="1"/>
<dbReference type="EMBL" id="CP000510">
    <property type="protein sequence ID" value="ABM04711.1"/>
    <property type="molecule type" value="Genomic_DNA"/>
</dbReference>
<dbReference type="RefSeq" id="WP_011771265.1">
    <property type="nucleotide sequence ID" value="NC_008709.1"/>
</dbReference>
<dbReference type="SMR" id="A1SYZ6"/>
<dbReference type="STRING" id="357804.Ping_3009"/>
<dbReference type="KEGG" id="pin:Ping_3009"/>
<dbReference type="eggNOG" id="COG0284">
    <property type="taxonomic scope" value="Bacteria"/>
</dbReference>
<dbReference type="HOGENOM" id="CLU_067069_0_0_6"/>
<dbReference type="OrthoDB" id="9806203at2"/>
<dbReference type="UniPathway" id="UPA00070">
    <property type="reaction ID" value="UER00120"/>
</dbReference>
<dbReference type="Proteomes" id="UP000000639">
    <property type="component" value="Chromosome"/>
</dbReference>
<dbReference type="GO" id="GO:0005829">
    <property type="term" value="C:cytosol"/>
    <property type="evidence" value="ECO:0007669"/>
    <property type="project" value="TreeGrafter"/>
</dbReference>
<dbReference type="GO" id="GO:0004590">
    <property type="term" value="F:orotidine-5'-phosphate decarboxylase activity"/>
    <property type="evidence" value="ECO:0007669"/>
    <property type="project" value="UniProtKB-UniRule"/>
</dbReference>
<dbReference type="GO" id="GO:0006207">
    <property type="term" value="P:'de novo' pyrimidine nucleobase biosynthetic process"/>
    <property type="evidence" value="ECO:0007669"/>
    <property type="project" value="InterPro"/>
</dbReference>
<dbReference type="GO" id="GO:0044205">
    <property type="term" value="P:'de novo' UMP biosynthetic process"/>
    <property type="evidence" value="ECO:0007669"/>
    <property type="project" value="UniProtKB-UniRule"/>
</dbReference>
<dbReference type="CDD" id="cd04725">
    <property type="entry name" value="OMP_decarboxylase_like"/>
    <property type="match status" value="1"/>
</dbReference>
<dbReference type="FunFam" id="3.20.20.70:FF:000015">
    <property type="entry name" value="Orotidine 5'-phosphate decarboxylase"/>
    <property type="match status" value="1"/>
</dbReference>
<dbReference type="Gene3D" id="3.20.20.70">
    <property type="entry name" value="Aldolase class I"/>
    <property type="match status" value="1"/>
</dbReference>
<dbReference type="HAMAP" id="MF_01200_B">
    <property type="entry name" value="OMPdecase_type1_B"/>
    <property type="match status" value="1"/>
</dbReference>
<dbReference type="InterPro" id="IPR013785">
    <property type="entry name" value="Aldolase_TIM"/>
</dbReference>
<dbReference type="InterPro" id="IPR014732">
    <property type="entry name" value="OMPdecase"/>
</dbReference>
<dbReference type="InterPro" id="IPR018089">
    <property type="entry name" value="OMPdecase_AS"/>
</dbReference>
<dbReference type="InterPro" id="IPR047596">
    <property type="entry name" value="OMPdecase_bac"/>
</dbReference>
<dbReference type="InterPro" id="IPR001754">
    <property type="entry name" value="OMPdeCOase_dom"/>
</dbReference>
<dbReference type="InterPro" id="IPR011060">
    <property type="entry name" value="RibuloseP-bd_barrel"/>
</dbReference>
<dbReference type="NCBIfam" id="NF001273">
    <property type="entry name" value="PRK00230.1"/>
    <property type="match status" value="1"/>
</dbReference>
<dbReference type="NCBIfam" id="TIGR01740">
    <property type="entry name" value="pyrF"/>
    <property type="match status" value="1"/>
</dbReference>
<dbReference type="PANTHER" id="PTHR32119">
    <property type="entry name" value="OROTIDINE 5'-PHOSPHATE DECARBOXYLASE"/>
    <property type="match status" value="1"/>
</dbReference>
<dbReference type="PANTHER" id="PTHR32119:SF2">
    <property type="entry name" value="OROTIDINE 5'-PHOSPHATE DECARBOXYLASE"/>
    <property type="match status" value="1"/>
</dbReference>
<dbReference type="Pfam" id="PF00215">
    <property type="entry name" value="OMPdecase"/>
    <property type="match status" value="1"/>
</dbReference>
<dbReference type="SMART" id="SM00934">
    <property type="entry name" value="OMPdecase"/>
    <property type="match status" value="1"/>
</dbReference>
<dbReference type="SUPFAM" id="SSF51366">
    <property type="entry name" value="Ribulose-phoshate binding barrel"/>
    <property type="match status" value="1"/>
</dbReference>
<dbReference type="PROSITE" id="PS00156">
    <property type="entry name" value="OMPDECASE"/>
    <property type="match status" value="1"/>
</dbReference>
<protein>
    <recommendedName>
        <fullName evidence="1">Orotidine 5'-phosphate decarboxylase</fullName>
        <ecNumber evidence="1">4.1.1.23</ecNumber>
    </recommendedName>
    <alternativeName>
        <fullName evidence="1">OMP decarboxylase</fullName>
        <shortName evidence="1">OMPDCase</shortName>
        <shortName evidence="1">OMPdecase</shortName>
    </alternativeName>
</protein>
<sequence length="234" mass="25651">MNQLVDPKVVIALDYQDKQQALHFISQLDPKHCRLKVGKEMFTHFGPEFVKQLVAKEFDVFLDLKFHDIPNTVASAVKVAADLGVWMVNVHASGGRRMMEAAKKILEPYGTNAPLLIAVTVLTSMDQSDLQELGIELSPAEQVKRLAKLAKLSGLDGVVCSAHEAQELKTLLGAEFKLITPGIRPMGSDAGDQRRIMTPKQAIDAGSDYLVIGRPITRATNPVEVLKNINDSLV</sequence>
<feature type="chain" id="PRO_1000065936" description="Orotidine 5'-phosphate decarboxylase">
    <location>
        <begin position="1"/>
        <end position="234"/>
    </location>
</feature>
<feature type="active site" description="Proton donor" evidence="1">
    <location>
        <position position="65"/>
    </location>
</feature>
<feature type="binding site" evidence="1">
    <location>
        <position position="14"/>
    </location>
    <ligand>
        <name>substrate</name>
    </ligand>
</feature>
<feature type="binding site" evidence="1">
    <location>
        <position position="36"/>
    </location>
    <ligand>
        <name>substrate</name>
    </ligand>
</feature>
<feature type="binding site" evidence="1">
    <location>
        <begin position="63"/>
        <end position="72"/>
    </location>
    <ligand>
        <name>substrate</name>
    </ligand>
</feature>
<feature type="binding site" evidence="1">
    <location>
        <position position="123"/>
    </location>
    <ligand>
        <name>substrate</name>
    </ligand>
</feature>
<feature type="binding site" evidence="1">
    <location>
        <position position="184"/>
    </location>
    <ligand>
        <name>substrate</name>
    </ligand>
</feature>
<feature type="binding site" evidence="1">
    <location>
        <position position="193"/>
    </location>
    <ligand>
        <name>substrate</name>
    </ligand>
</feature>
<feature type="binding site" evidence="1">
    <location>
        <position position="213"/>
    </location>
    <ligand>
        <name>substrate</name>
    </ligand>
</feature>
<feature type="binding site" evidence="1">
    <location>
        <position position="214"/>
    </location>
    <ligand>
        <name>substrate</name>
    </ligand>
</feature>
<evidence type="ECO:0000255" key="1">
    <source>
        <dbReference type="HAMAP-Rule" id="MF_01200"/>
    </source>
</evidence>
<gene>
    <name evidence="1" type="primary">pyrF</name>
    <name type="ordered locus">Ping_3009</name>
</gene>
<accession>A1SYZ6</accession>